<dbReference type="EMBL" id="J01917">
    <property type="protein sequence ID" value="AAA92197.1"/>
    <property type="molecule type" value="Genomic_DNA"/>
</dbReference>
<dbReference type="EMBL" id="J01917">
    <property type="protein sequence ID" value="AAA92198.1"/>
    <property type="molecule type" value="Genomic_DNA"/>
</dbReference>
<dbReference type="EMBL" id="J01917">
    <property type="protein sequence ID" value="AAA92199.1"/>
    <property type="molecule type" value="Genomic_DNA"/>
</dbReference>
<dbReference type="PIR" id="A03824">
    <property type="entry name" value="Q2AD2"/>
</dbReference>
<dbReference type="RefSeq" id="AP_000161.1">
    <property type="nucleotide sequence ID" value="AC_000007.1"/>
</dbReference>
<dbReference type="BMRB" id="P03254"/>
<dbReference type="SMR" id="P03254"/>
<dbReference type="DIP" id="DIP-570N"/>
<dbReference type="ELM" id="P03254"/>
<dbReference type="IntAct" id="P03254">
    <property type="interactions" value="3"/>
</dbReference>
<dbReference type="MINT" id="P03254"/>
<dbReference type="KEGG" id="vg:2652980"/>
<dbReference type="Proteomes" id="UP000008167">
    <property type="component" value="Segment"/>
</dbReference>
<dbReference type="GO" id="GO:0042025">
    <property type="term" value="C:host cell nucleus"/>
    <property type="evidence" value="ECO:0007669"/>
    <property type="project" value="UniProtKB-SubCell"/>
</dbReference>
<dbReference type="GO" id="GO:0046872">
    <property type="term" value="F:metal ion binding"/>
    <property type="evidence" value="ECO:0000269"/>
    <property type="project" value="DisProt"/>
</dbReference>
<dbReference type="GO" id="GO:0008270">
    <property type="term" value="F:zinc ion binding"/>
    <property type="evidence" value="ECO:0007669"/>
    <property type="project" value="UniProtKB-KW"/>
</dbReference>
<dbReference type="GO" id="GO:0039695">
    <property type="term" value="P:DNA-templated viral transcription"/>
    <property type="evidence" value="ECO:0000314"/>
    <property type="project" value="UniProtKB"/>
</dbReference>
<dbReference type="GO" id="GO:0006355">
    <property type="term" value="P:regulation of DNA-templated transcription"/>
    <property type="evidence" value="ECO:0007669"/>
    <property type="project" value="InterPro"/>
</dbReference>
<dbReference type="GO" id="GO:0052151">
    <property type="term" value="P:symbiont-mediated activation of host apoptosis"/>
    <property type="evidence" value="ECO:0000269"/>
    <property type="project" value="SigSci"/>
</dbReference>
<dbReference type="GO" id="GO:0039645">
    <property type="term" value="P:symbiont-mediated perturbation of host cell cycle G1/S transition checkpoint"/>
    <property type="evidence" value="ECO:0007669"/>
    <property type="project" value="UniProtKB-KW"/>
</dbReference>
<dbReference type="GO" id="GO:0039648">
    <property type="term" value="P:symbiont-mediated perturbation of host ubiquitin-like protein modification"/>
    <property type="evidence" value="ECO:0007669"/>
    <property type="project" value="UniProtKB-KW"/>
</dbReference>
<dbReference type="GO" id="GO:0141074">
    <property type="term" value="P:symbiont-mediated suppression of host cGAS-STING signal transduction"/>
    <property type="evidence" value="ECO:0000269"/>
    <property type="project" value="SigSci"/>
</dbReference>
<dbReference type="GO" id="GO:0039657">
    <property type="term" value="P:symbiont-mediated suppression of host gene expression"/>
    <property type="evidence" value="ECO:0007669"/>
    <property type="project" value="UniProtKB-KW"/>
</dbReference>
<dbReference type="GO" id="GO:0039563">
    <property type="term" value="P:symbiont-mediated suppression of host JAK-STAT cascade via inhibition of STAT1 activity"/>
    <property type="evidence" value="ECO:0007669"/>
    <property type="project" value="UniProtKB-KW"/>
</dbReference>
<dbReference type="GO" id="GO:0039502">
    <property type="term" value="P:symbiont-mediated suppression of host type I interferon-mediated signaling pathway"/>
    <property type="evidence" value="ECO:0007669"/>
    <property type="project" value="UniProtKB-KW"/>
</dbReference>
<dbReference type="DisProt" id="DP01928"/>
<dbReference type="InterPro" id="IPR014410">
    <property type="entry name" value="Aden_E1A"/>
</dbReference>
<dbReference type="Pfam" id="PF02703">
    <property type="entry name" value="Adeno_E1A"/>
    <property type="match status" value="3"/>
</dbReference>
<dbReference type="PIRSF" id="PIRSF003669">
    <property type="entry name" value="Aden_E1A"/>
    <property type="match status" value="1"/>
</dbReference>
<sequence length="289" mass="31851">MRHIICHGGVITEEMAASLLDQLIEEVLADNLPPPSHFEPPTLHELYDLDVTAPEDPNEEAVSQIFPDSVMLAVQEGIDLLTFPPAPGSPEPPHLSRQPEQPEQRALGPVSMPNLVPEVIDLTCHEAGFPPSDDEDEEGEEFVLDYVEHPGHGCRSCHYHRRNTGDPDIMCSLCYMRTCGMFVYSPVSEPEPEPEPEPEPARPTRRPKLVPAILRRPTSPVSRECNSSTDSCDSGPSNTPPEIHPVVPLCPIKPVAVRVGGRRQAVECIEDLLNESGQPLDLSCKRPRP</sequence>
<comment type="function">
    <text evidence="2">Plays a role in viral genome replication by driving entry of quiescent cells into the cell cycle. Stimulation of progression from G1 to S phase allows the virus to efficiently use the cellular DNA replicating machinery to achieve viral genome replication. E1A protein has both transforming and trans-activating activities. Induces the disassembly of the E2F1 transcription factor from RB1 by direct competition for the same binding site on RB1, with subsequent transcriptional activation of E2F1-regulated S-phase genes and of the E2 region of the adenoviral genome. Release of E2F1 leads to the ARF-mediated inhibition of MDM2 and causes TP53/p53 to accumulate because it is not targeted for degradation by MDM2-mediated ubiquitination anymore. This increase in TP53, in turn, would arrest the cell proliferation and direct its death but this effect is counteracted by the viral protein E1B-55K. Inactivation of the ability of RB1 to arrest the cell cycle is critical for cellular transformation, uncontrolled cellular growth and proliferation induced by viral infection. Interaction with RBX1 and CUL1 inhibits ubiquitination of the proteins targeted by SCF(FBXW7) ubiquitin ligase complex, and may be linked to unregulated host cell proliferation. The tumorigenesis-restraining activity of E1A may be related to the disruption of the host CtBP-CtIP complex through the CtBP binding motif. Interacts with host TBP protein; this interaction probably disrupts the TBP-TATA complex. Interaction with host TMEM173/STING impairs the ability of TMEM173/STING to sense cytosolic DNA and promote the production of type I interferon (IFN-alpha and IFN-beta). Promotes the sumoylation of host ZBED1/hDREF with SUMO1 (By similarity).</text>
</comment>
<comment type="subunit">
    <text evidence="2 5">Interacts with host UBE2I; this interaction interferes with polySUMOylation. Interacts with host RB1; this interaction induces the aberrant dissociation of RB1-E2F1 complex thereby disrupting the activity of RB1 and activating E2F1-regulated genes. Interacts with host ATF7; the interaction enhances ATF7-mediated viral transactivation activity which requires the zinc binding domains of both proteins (PubMed:8417352). Isoform early E1A 32 kDa protein and isoform early E1A 26 kDa protein interact (via N-terminus) with CUL1 and E3 ubiquitin ligase RBX1; these interactions inhibit RBX1-CUL1-dependent elongation reaction of ubiquitin chains and attenuate ubiquitination of SCF(FBXW7) target proteins. Interacts (via PXLXP motif) with host ZMYND11/BS69 (via MYND-type zinc finger); this interaction inhibits E1A mediated transactivation. Interacts with host EP300; this interaction stimulates the acetylation of RB1 by recruiting EP300 and RB1 into a multimeric-protein complex. Interacts with host CTBP1 and CTBP2; this interaction seems to potentiate viral replication. Interacts with host DCAF7. Interacts with host DYRK1A. Interacts with host KPNA4; this interaction allows E1A import into the host nucleus. Interacts with host EP400; this interaction stabilizes MYC. Interacts (via LXCXE motif) with host TMEM173/STING; this interaction impairs the ability of TMEM173/STING to sense cytosolic DNA and promote the production of type I interferon (IFN-alpha and IFN-beta) (By similarity). Interacts (via C-terminus) with host ZBED1/hDREF (via C-terminus); the interaction is direct (By similarity).</text>
</comment>
<comment type="interaction">
    <interactant intactId="EBI-8599077">
        <id>P03254</id>
    </interactant>
    <interactant intactId="EBI-296306">
        <id>P45481</id>
        <label>Crebbp</label>
    </interactant>
    <organismsDiffer>true</organismsDiffer>
    <experiments>3</experiments>
</comment>
<comment type="interaction">
    <interactant intactId="EBI-8599077">
        <id>P03254</id>
    </interactant>
    <interactant intactId="EBI-491274">
        <id>P06400</id>
        <label>RB1</label>
    </interactant>
    <organismsDiffer>true</organismsDiffer>
    <experiments>3</experiments>
</comment>
<comment type="subcellular location">
    <subcellularLocation>
        <location evidence="2">Host nucleus</location>
    </subcellularLocation>
</comment>
<comment type="alternative products">
    <event type="alternative splicing"/>
    <isoform>
        <id>P03254-1</id>
        <name>early E1A 32 kDa protein</name>
        <name>289R</name>
        <name>L-E1A</name>
        <sequence type="displayed"/>
    </isoform>
    <isoform>
        <id>P03254-2</id>
        <name>early E1A 26 kDa protein</name>
        <name>243R</name>
        <name>S-E1A</name>
        <sequence type="described" ref="VSP_000197"/>
    </isoform>
    <isoform>
        <id>P03254-3</id>
        <name>early E1A 6 kDa protein</name>
        <sequence type="described" ref="VSP_028916 VSP_028917"/>
    </isoform>
    <text>Isoforms are derived from the E1 region of the genome.</text>
</comment>
<comment type="similarity">
    <text evidence="6">Belongs to the adenoviridae E1A protein family.</text>
</comment>
<organismHost>
    <name type="scientific">Homo sapiens</name>
    <name type="common">Human</name>
    <dbReference type="NCBI Taxonomy" id="9606"/>
</organismHost>
<organism>
    <name type="scientific">Human adenovirus C serotype 2</name>
    <name type="common">HAdV-2</name>
    <name type="synonym">Human adenovirus 2</name>
    <dbReference type="NCBI Taxonomy" id="10515"/>
    <lineage>
        <taxon>Viruses</taxon>
        <taxon>Varidnaviria</taxon>
        <taxon>Bamfordvirae</taxon>
        <taxon>Preplasmiviricota</taxon>
        <taxon>Tectiliviricetes</taxon>
        <taxon>Rowavirales</taxon>
        <taxon>Adenoviridae</taxon>
        <taxon>Mastadenovirus</taxon>
        <taxon>Human mastadenovirus C</taxon>
    </lineage>
</organism>
<proteinExistence type="evidence at protein level"/>
<accession>P03254</accession>
<accession>P24934</accession>
<accession>Q67788</accession>
<protein>
    <recommendedName>
        <fullName evidence="6">Early E1A protein</fullName>
    </recommendedName>
    <alternativeName>
        <fullName>Early E1A 32 kDa protein</fullName>
    </alternativeName>
</protein>
<keyword id="KW-0010">Activator</keyword>
<keyword id="KW-0025">Alternative splicing</keyword>
<keyword id="KW-0244">Early protein</keyword>
<keyword id="KW-1262">Eukaryotic host gene expression shutoff by virus</keyword>
<keyword id="KW-1191">Eukaryotic host transcription shutoff by virus</keyword>
<keyword id="KW-1078">G1/S host cell cycle checkpoint dysregulation by virus</keyword>
<keyword id="KW-1190">Host gene expression shutoff by virus</keyword>
<keyword id="KW-1048">Host nucleus</keyword>
<keyword id="KW-0945">Host-virus interaction</keyword>
<keyword id="KW-1111">Inhibition of eukaryotic host transcription initiation by virus</keyword>
<keyword id="KW-1090">Inhibition of host innate immune response by virus</keyword>
<keyword id="KW-1114">Inhibition of host interferon signaling pathway by virus</keyword>
<keyword id="KW-1105">Inhibition of host STAT1 by virus</keyword>
<keyword id="KW-0922">Interferon antiviral system evasion</keyword>
<keyword id="KW-0479">Metal-binding</keyword>
<keyword id="KW-1121">Modulation of host cell cycle by virus</keyword>
<keyword id="KW-1123">Modulation of host E3 ubiquitin ligases by virus</keyword>
<keyword id="KW-1130">Modulation of host ubiquitin pathway by virus</keyword>
<keyword id="KW-0553">Oncogene</keyword>
<keyword id="KW-0597">Phosphoprotein</keyword>
<keyword id="KW-1185">Reference proteome</keyword>
<keyword id="KW-0804">Transcription</keyword>
<keyword id="KW-0805">Transcription regulation</keyword>
<keyword id="KW-0899">Viral immunoevasion</keyword>
<keyword id="KW-0862">Zinc</keyword>
<keyword id="KW-0863">Zinc-finger</keyword>
<reference key="1">
    <citation type="journal article" date="1979" name="Nature">
        <title>Structure of two spliced mRNAs from the transforming region of human subgroup C adenoviruses.</title>
        <authorList>
            <person name="Perricaudet M."/>
            <person name="Akusjaervi G."/>
            <person name="Virtanen A."/>
            <person name="Pettersson U."/>
        </authorList>
    </citation>
    <scope>NUCLEOTIDE SEQUENCE [GENOMIC DNA] (ISOFORMS EARLY E1A 32 KDA PROTEIN AND EARLY E1A 26 KDA PROTEIN)</scope>
</reference>
<reference key="2">
    <citation type="journal article" date="1982" name="J. Biol. Chem.">
        <title>Nucleotide sequences from the adenovirus-2 genome.</title>
        <authorList>
            <person name="Gingeras T.R."/>
            <person name="Sciaky D."/>
            <person name="Gelinas R.E."/>
            <person name="Bing-Dong J."/>
            <person name="Yen C.E."/>
            <person name="Kelly M.M."/>
            <person name="Bullock P.A."/>
            <person name="Parsons B.L."/>
            <person name="O'Neill K.E."/>
            <person name="Roberts R.J."/>
        </authorList>
    </citation>
    <scope>NUCLEOTIDE SEQUENCE [GENOMIC DNA] (ISOFORMS EARLY E1A 32 KDA PROTEIN; EARLY E1A 26 KDA PROTEIN AND EARLY E1A 6 KDA PROTEIN)</scope>
</reference>
<reference key="3">
    <citation type="journal article" date="1993" name="Mol. Cell. Biol.">
        <title>Transcriptional activation by the adenovirus larger E1a product is mediated by members of the cellular transcription factor ATF family which can directly associate with E1a.</title>
        <authorList>
            <person name="Chatton B."/>
            <person name="Bocco J.L."/>
            <person name="Gaire M."/>
            <person name="Hauss C."/>
            <person name="Reimund B."/>
            <person name="Goetz J."/>
            <person name="Kedinger C."/>
        </authorList>
    </citation>
    <scope>INTERACTION WITH HOST ATF7</scope>
    <scope>MUTAGENESIS OF CYS-157; THR-178 AND SER-185</scope>
</reference>
<name>E1A_ADE02</name>
<feature type="chain" id="PRO_0000221692" description="Early E1A protein">
    <location>
        <begin position="1"/>
        <end position="289"/>
    </location>
</feature>
<feature type="zinc finger region" evidence="2">
    <location>
        <begin position="154"/>
        <end position="174"/>
    </location>
</feature>
<feature type="region of interest" description="Interaction with RB1 in competition with E2F1" evidence="1">
    <location>
        <begin position="41"/>
        <end position="49"/>
    </location>
</feature>
<feature type="region of interest" description="Interaction with UBE2I" evidence="1">
    <location>
        <begin position="76"/>
        <end position="140"/>
    </location>
</feature>
<feature type="region of interest" description="Disordered" evidence="4">
    <location>
        <begin position="82"/>
        <end position="107"/>
    </location>
</feature>
<feature type="region of interest" description="Disordered" evidence="4">
    <location>
        <begin position="187"/>
        <end position="245"/>
    </location>
</feature>
<feature type="short sequence motif" description="PXLXP motif, interaction with host ZMYND11" evidence="1">
    <location>
        <begin position="113"/>
        <end position="117"/>
    </location>
</feature>
<feature type="short sequence motif" description="LXCXE motif, interaction with host RB1 and TMEM173/STING" evidence="3">
    <location>
        <begin position="122"/>
        <end position="126"/>
    </location>
</feature>
<feature type="short sequence motif" description="Bipartite nuclear localization signal" evidence="2 3">
    <location>
        <begin position="258"/>
        <end position="289"/>
    </location>
</feature>
<feature type="short sequence motif" description="PXDLS motif, CTBP-binding" evidence="2">
    <location>
        <begin position="279"/>
        <end position="283"/>
    </location>
</feature>
<feature type="compositionally biased region" description="Pro residues" evidence="4">
    <location>
        <begin position="84"/>
        <end position="93"/>
    </location>
</feature>
<feature type="compositionally biased region" description="Polar residues" evidence="4">
    <location>
        <begin position="219"/>
        <end position="237"/>
    </location>
</feature>
<feature type="modified residue" description="Phosphoserine; by host" evidence="1">
    <location>
        <position position="89"/>
    </location>
</feature>
<feature type="modified residue" description="Phosphoserine; by host" evidence="1">
    <location>
        <position position="219"/>
    </location>
</feature>
<feature type="modified residue" description="Phosphoserine; by host" evidence="1">
    <location>
        <position position="231"/>
    </location>
</feature>
<feature type="splice variant" id="VSP_028916" description="In isoform early E1A 6 kDa protein." evidence="6">
    <original>ADNLPPPSHFEPPTLHELYDLDVTAPE</original>
    <variation>CLNLSLSPSQNRSLQDLPGVLNWCLLS</variation>
    <location>
        <begin position="29"/>
        <end position="55"/>
    </location>
</feature>
<feature type="splice variant" id="VSP_028917" description="In isoform early E1A 6 kDa protein." evidence="6">
    <location>
        <begin position="56"/>
        <end position="289"/>
    </location>
</feature>
<feature type="splice variant" id="VSP_000197" description="In isoform early E1A 26 kDa protein." evidence="6">
    <location>
        <begin position="140"/>
        <end position="185"/>
    </location>
</feature>
<feature type="mutagenesis site" description="Abolishes ATF7-mediated transcriptional activation." evidence="5">
    <original>C</original>
    <variation>S</variation>
    <location>
        <position position="157"/>
    </location>
</feature>
<feature type="mutagenesis site" description="No effect on ATF7-mediated transcriptional activation." evidence="5">
    <original>T</original>
    <variation>P</variation>
    <location>
        <position position="178"/>
    </location>
</feature>
<feature type="mutagenesis site" description="Abolishes ATF7-mediated transcriptional activation." evidence="5">
    <original>S</original>
    <variation>R</variation>
    <location>
        <position position="185"/>
    </location>
</feature>
<feature type="sequence conflict" description="In Ref. 2; AAA92197/AAA92199." evidence="6" ref="2">
    <original>D</original>
    <variation>E</variation>
    <location>
        <position position="68"/>
    </location>
</feature>
<feature type="sequence conflict" description="In Ref. 2; AAA92197/AAA92199." evidence="6" ref="2">
    <original>L</original>
    <variation>F</variation>
    <location>
        <position position="81"/>
    </location>
</feature>
<evidence type="ECO:0000250" key="1"/>
<evidence type="ECO:0000250" key="2">
    <source>
        <dbReference type="UniProtKB" id="P03255"/>
    </source>
</evidence>
<evidence type="ECO:0000255" key="3"/>
<evidence type="ECO:0000256" key="4">
    <source>
        <dbReference type="SAM" id="MobiDB-lite"/>
    </source>
</evidence>
<evidence type="ECO:0000269" key="5">
    <source>
    </source>
</evidence>
<evidence type="ECO:0000305" key="6"/>